<feature type="chain" id="PRO_0000067975" description="Glutathione reductase">
    <location>
        <begin position="1"/>
        <end position="450"/>
    </location>
</feature>
<feature type="active site" description="Proton acceptor" evidence="1">
    <location>
        <position position="439"/>
    </location>
</feature>
<feature type="binding site" evidence="3 4 6 7 8 9">
    <location>
        <position position="14"/>
    </location>
    <ligand>
        <name>FAD</name>
        <dbReference type="ChEBI" id="CHEBI:57692"/>
    </ligand>
</feature>
<feature type="binding site" evidence="1">
    <location>
        <position position="14"/>
    </location>
    <ligand>
        <name>glutathione</name>
        <dbReference type="ChEBI" id="CHEBI:57925"/>
    </ligand>
</feature>
<feature type="binding site" evidence="3 4 6 7 8 9">
    <location>
        <position position="15"/>
    </location>
    <ligand>
        <name>FAD</name>
        <dbReference type="ChEBI" id="CHEBI:57692"/>
    </ligand>
</feature>
<feature type="binding site" evidence="3 4 6 7 8 9">
    <location>
        <position position="34"/>
    </location>
    <ligand>
        <name>FAD</name>
        <dbReference type="ChEBI" id="CHEBI:57692"/>
    </ligand>
</feature>
<feature type="binding site" evidence="3 4 6 7 8 9">
    <location>
        <position position="41"/>
    </location>
    <ligand>
        <name>FAD</name>
        <dbReference type="ChEBI" id="CHEBI:57692"/>
    </ligand>
</feature>
<feature type="binding site" evidence="3 4 6 7 8 9">
    <location>
        <position position="42"/>
    </location>
    <ligand>
        <name>FAD</name>
        <dbReference type="ChEBI" id="CHEBI:57692"/>
    </ligand>
</feature>
<feature type="binding site" evidence="3 4 6 7 8 9">
    <location>
        <position position="50"/>
    </location>
    <ligand>
        <name>FAD</name>
        <dbReference type="ChEBI" id="CHEBI:57692"/>
    </ligand>
</feature>
<feature type="binding site" evidence="1">
    <location>
        <position position="99"/>
    </location>
    <ligand>
        <name>glutathione</name>
        <dbReference type="ChEBI" id="CHEBI:57925"/>
    </ligand>
</feature>
<feature type="binding site" evidence="3 4 6 7 8 9">
    <location>
        <position position="115"/>
    </location>
    <ligand>
        <name>FAD</name>
        <dbReference type="ChEBI" id="CHEBI:57692"/>
    </ligand>
</feature>
<feature type="binding site" evidence="3 8">
    <location>
        <position position="175"/>
    </location>
    <ligand>
        <name>NADP(+)</name>
        <dbReference type="ChEBI" id="CHEBI:58349"/>
    </ligand>
</feature>
<feature type="binding site" evidence="3 8">
    <location>
        <position position="178"/>
    </location>
    <ligand>
        <name>NADP(+)</name>
        <dbReference type="ChEBI" id="CHEBI:58349"/>
    </ligand>
</feature>
<feature type="binding site" evidence="3 8">
    <location>
        <position position="181"/>
    </location>
    <ligand>
        <name>NADP(+)</name>
        <dbReference type="ChEBI" id="CHEBI:58349"/>
    </ligand>
</feature>
<feature type="binding site" evidence="3 8">
    <location>
        <position position="198"/>
    </location>
    <ligand>
        <name>NADP(+)</name>
        <dbReference type="ChEBI" id="CHEBI:58349"/>
    </ligand>
</feature>
<feature type="binding site" evidence="3 8">
    <location>
        <position position="204"/>
    </location>
    <ligand>
        <name>NADP(+)</name>
        <dbReference type="ChEBI" id="CHEBI:58349"/>
    </ligand>
</feature>
<feature type="binding site" evidence="3 8">
    <location>
        <position position="262"/>
    </location>
    <ligand>
        <name>NADP(+)</name>
        <dbReference type="ChEBI" id="CHEBI:58349"/>
    </ligand>
</feature>
<feature type="binding site" evidence="3 4 6 7 8 9">
    <location>
        <position position="303"/>
    </location>
    <ligand>
        <name>FAD</name>
        <dbReference type="ChEBI" id="CHEBI:57692"/>
    </ligand>
</feature>
<feature type="binding site" evidence="3 8">
    <location>
        <position position="309"/>
    </location>
    <ligand>
        <name>NADP(+)</name>
        <dbReference type="ChEBI" id="CHEBI:58349"/>
    </ligand>
</feature>
<feature type="binding site" evidence="3 4 6 7 8 9">
    <location>
        <position position="311"/>
    </location>
    <ligand>
        <name>FAD</name>
        <dbReference type="ChEBI" id="CHEBI:57692"/>
    </ligand>
</feature>
<feature type="binding site" evidence="1">
    <location>
        <position position="319"/>
    </location>
    <ligand>
        <name>glutathione</name>
        <dbReference type="ChEBI" id="CHEBI:57925"/>
    </ligand>
</feature>
<feature type="binding site" evidence="3 8">
    <location>
        <position position="342"/>
    </location>
    <ligand>
        <name>NADP(+)</name>
        <dbReference type="ChEBI" id="CHEBI:58349"/>
    </ligand>
</feature>
<feature type="binding site" evidence="3 4 6 7 8 9">
    <location>
        <position position="439"/>
    </location>
    <ligand>
        <name>FAD</name>
        <dbReference type="ChEBI" id="CHEBI:57692"/>
    </ligand>
</feature>
<feature type="disulfide bond" description="Redox-active" evidence="3 4 6 7">
    <location>
        <begin position="42"/>
        <end position="47"/>
    </location>
</feature>
<feature type="strand" evidence="10">
    <location>
        <begin position="4"/>
        <end position="10"/>
    </location>
</feature>
<feature type="helix" evidence="10">
    <location>
        <begin position="14"/>
        <end position="24"/>
    </location>
</feature>
<feature type="turn" evidence="10">
    <location>
        <begin position="25"/>
        <end position="27"/>
    </location>
</feature>
<feature type="strand" evidence="10">
    <location>
        <begin position="30"/>
        <end position="36"/>
    </location>
</feature>
<feature type="helix" evidence="10">
    <location>
        <begin position="40"/>
        <end position="45"/>
    </location>
</feature>
<feature type="helix" evidence="10">
    <location>
        <begin position="47"/>
        <end position="64"/>
    </location>
</feature>
<feature type="helix" evidence="10">
    <location>
        <begin position="67"/>
        <end position="70"/>
    </location>
</feature>
<feature type="strand" evidence="10">
    <location>
        <begin position="72"/>
        <end position="79"/>
    </location>
</feature>
<feature type="helix" evidence="10">
    <location>
        <begin position="81"/>
        <end position="105"/>
    </location>
</feature>
<feature type="strand" evidence="10">
    <location>
        <begin position="109"/>
        <end position="113"/>
    </location>
</feature>
<feature type="strand" evidence="10">
    <location>
        <begin position="116"/>
        <end position="119"/>
    </location>
</feature>
<feature type="strand" evidence="10">
    <location>
        <begin position="122"/>
        <end position="125"/>
    </location>
</feature>
<feature type="strand" evidence="10">
    <location>
        <begin position="128"/>
        <end position="137"/>
    </location>
</feature>
<feature type="strand" evidence="10">
    <location>
        <begin position="141"/>
        <end position="143"/>
    </location>
</feature>
<feature type="helix" evidence="10">
    <location>
        <begin position="151"/>
        <end position="153"/>
    </location>
</feature>
<feature type="helix" evidence="10">
    <location>
        <begin position="157"/>
        <end position="162"/>
    </location>
</feature>
<feature type="strand" evidence="10">
    <location>
        <begin position="168"/>
        <end position="173"/>
    </location>
</feature>
<feature type="helix" evidence="10">
    <location>
        <begin position="177"/>
        <end position="188"/>
    </location>
</feature>
<feature type="strand" evidence="10">
    <location>
        <begin position="192"/>
        <end position="196"/>
    </location>
</feature>
<feature type="strand" evidence="10">
    <location>
        <begin position="198"/>
        <end position="203"/>
    </location>
</feature>
<feature type="helix" evidence="10">
    <location>
        <begin position="208"/>
        <end position="221"/>
    </location>
</feature>
<feature type="strand" evidence="10">
    <location>
        <begin position="224"/>
        <end position="226"/>
    </location>
</feature>
<feature type="strand" evidence="10">
    <location>
        <begin position="231"/>
        <end position="236"/>
    </location>
</feature>
<feature type="strand" evidence="10">
    <location>
        <begin position="242"/>
        <end position="246"/>
    </location>
</feature>
<feature type="strand" evidence="10">
    <location>
        <begin position="251"/>
        <end position="259"/>
    </location>
</feature>
<feature type="strand" evidence="10">
    <location>
        <begin position="263"/>
        <end position="266"/>
    </location>
</feature>
<feature type="helix" evidence="11">
    <location>
        <begin position="268"/>
        <end position="270"/>
    </location>
</feature>
<feature type="helix" evidence="10">
    <location>
        <begin position="272"/>
        <end position="275"/>
    </location>
</feature>
<feature type="strand" evidence="10">
    <location>
        <begin position="298"/>
        <end position="300"/>
    </location>
</feature>
<feature type="helix" evidence="10">
    <location>
        <begin position="303"/>
        <end position="305"/>
    </location>
</feature>
<feature type="helix" evidence="10">
    <location>
        <begin position="311"/>
        <end position="326"/>
    </location>
</feature>
<feature type="strand" evidence="10">
    <location>
        <begin position="341"/>
        <end position="343"/>
    </location>
</feature>
<feature type="strand" evidence="10">
    <location>
        <begin position="349"/>
        <end position="353"/>
    </location>
</feature>
<feature type="helix" evidence="10">
    <location>
        <begin position="356"/>
        <end position="363"/>
    </location>
</feature>
<feature type="helix" evidence="10">
    <location>
        <begin position="365"/>
        <end position="367"/>
    </location>
</feature>
<feature type="strand" evidence="10">
    <location>
        <begin position="368"/>
        <end position="376"/>
    </location>
</feature>
<feature type="helix" evidence="10">
    <location>
        <begin position="378"/>
        <end position="381"/>
    </location>
</feature>
<feature type="strand" evidence="10">
    <location>
        <begin position="383"/>
        <end position="385"/>
    </location>
</feature>
<feature type="strand" evidence="10">
    <location>
        <begin position="388"/>
        <end position="396"/>
    </location>
</feature>
<feature type="turn" evidence="10">
    <location>
        <begin position="397"/>
        <end position="400"/>
    </location>
</feature>
<feature type="strand" evidence="10">
    <location>
        <begin position="401"/>
        <end position="409"/>
    </location>
</feature>
<feature type="helix" evidence="10">
    <location>
        <begin position="412"/>
        <end position="424"/>
    </location>
</feature>
<feature type="helix" evidence="10">
    <location>
        <begin position="429"/>
        <end position="433"/>
    </location>
</feature>
<feature type="helix" evidence="10">
    <location>
        <begin position="443"/>
        <end position="447"/>
    </location>
</feature>
<gene>
    <name type="primary">gor</name>
    <name type="ordered locus">b3500</name>
    <name type="ordered locus">JW3467</name>
</gene>
<proteinExistence type="evidence at protein level"/>
<name>GSHR_ECOLI</name>
<sequence length="450" mass="48773">MTKHYDYIAIGGGSGGIASINRAAMYGQKCALIEAKELGGTCVNVGCVPKKVMWHAAQIREAIHMYGPDYGFDTTINKFNWETLIASRTAYIDRIHTSYENVLGKNNVDVIKGFARFVDAKTLEVNGETITADHILIATGGRPSHPDIPGVEYGIDSDGFFALPALPERVAVVGAGYIAVELAGVINGLGAKTHLFVRKHAPLRSFDPMISETLVEVMNAEGPQLHTNAIPKAVVKNTDGSLTLELEDGRSETVDCLIWAIGREPANDNINLEAAGVKTNEKGYIVVDKYQNTNIEGIYAVGDNTGAVELTPVAVAAGRRLSERLFNNKPDEHLDYSNIPTVVFSHPPIGTVGLTEPQAREQYGDDQVKVYKSSFTAMYTAVTTHRQPCRMKLVCVGSEEKIVGIHGIGFGMDEMLQGFAVALKMGATKKDFDNTVAIHPTAAEEFVTMR</sequence>
<organism>
    <name type="scientific">Escherichia coli (strain K12)</name>
    <dbReference type="NCBI Taxonomy" id="83333"/>
    <lineage>
        <taxon>Bacteria</taxon>
        <taxon>Pseudomonadati</taxon>
        <taxon>Pseudomonadota</taxon>
        <taxon>Gammaproteobacteria</taxon>
        <taxon>Enterobacterales</taxon>
        <taxon>Enterobacteriaceae</taxon>
        <taxon>Escherichia</taxon>
    </lineage>
</organism>
<reference key="1">
    <citation type="journal article" date="1986" name="Biochemistry">
        <title>Glutathione reductase from Escherichia coli: cloning and sequence analysis of the gene and relationship to other flavoprotein disulfide oxidoreductases.</title>
        <authorList>
            <person name="Greer S."/>
            <person name="Perham R.N."/>
        </authorList>
    </citation>
    <scope>NUCLEOTIDE SEQUENCE [GENOMIC DNA]</scope>
    <source>
        <strain>K12</strain>
    </source>
</reference>
<reference key="2">
    <citation type="journal article" date="1994" name="Nucleic Acids Res.">
        <title>Analysis of the Escherichia coli genome. V. DNA sequence of the region from 76.0 to 81.5 minutes.</title>
        <authorList>
            <person name="Sofia H.J."/>
            <person name="Burland V."/>
            <person name="Daniels D.L."/>
            <person name="Plunkett G. III"/>
            <person name="Blattner F.R."/>
        </authorList>
    </citation>
    <scope>NUCLEOTIDE SEQUENCE [LARGE SCALE GENOMIC DNA]</scope>
    <source>
        <strain>K12 / MG1655 / ATCC 47076</strain>
    </source>
</reference>
<reference key="3">
    <citation type="journal article" date="1997" name="Science">
        <title>The complete genome sequence of Escherichia coli K-12.</title>
        <authorList>
            <person name="Blattner F.R."/>
            <person name="Plunkett G. III"/>
            <person name="Bloch C.A."/>
            <person name="Perna N.T."/>
            <person name="Burland V."/>
            <person name="Riley M."/>
            <person name="Collado-Vides J."/>
            <person name="Glasner J.D."/>
            <person name="Rode C.K."/>
            <person name="Mayhew G.F."/>
            <person name="Gregor J."/>
            <person name="Davis N.W."/>
            <person name="Kirkpatrick H.A."/>
            <person name="Goeden M.A."/>
            <person name="Rose D.J."/>
            <person name="Mau B."/>
            <person name="Shao Y."/>
        </authorList>
    </citation>
    <scope>NUCLEOTIDE SEQUENCE [LARGE SCALE GENOMIC DNA]</scope>
    <source>
        <strain>K12 / MG1655 / ATCC 47076</strain>
    </source>
</reference>
<reference key="4">
    <citation type="journal article" date="2006" name="Mol. Syst. Biol.">
        <title>Highly accurate genome sequences of Escherichia coli K-12 strains MG1655 and W3110.</title>
        <authorList>
            <person name="Hayashi K."/>
            <person name="Morooka N."/>
            <person name="Yamamoto Y."/>
            <person name="Fujita K."/>
            <person name="Isono K."/>
            <person name="Choi S."/>
            <person name="Ohtsubo E."/>
            <person name="Baba T."/>
            <person name="Wanner B.L."/>
            <person name="Mori H."/>
            <person name="Horiuchi T."/>
        </authorList>
    </citation>
    <scope>NUCLEOTIDE SEQUENCE [LARGE SCALE GENOMIC DNA]</scope>
    <source>
        <strain>K12 / W3110 / ATCC 27325 / DSM 5911</strain>
    </source>
</reference>
<reference key="5">
    <citation type="journal article" date="1984" name="Z. Naturforsch. C Biosci.">
        <title>Purification by affinity chromatography of glutathione reductase (EC 1.6.4.2) from Escherichia coli and characterization of such enzyme.</title>
        <authorList>
            <person name="Mata A.M."/>
            <person name="Pinto M.C."/>
            <person name="Lopez-Barea J."/>
        </authorList>
    </citation>
    <scope>FUNCTION</scope>
    <scope>CATALYTIC ACTIVITY</scope>
    <scope>COFACTOR</scope>
    <scope>SUBUNIT</scope>
    <scope>SUBCELLULAR LOCATION</scope>
</reference>
<reference key="6">
    <citation type="journal article" date="1997" name="Electrophoresis">
        <title>Escherichia coli proteome analysis using the gene-protein database.</title>
        <authorList>
            <person name="VanBogelen R.A."/>
            <person name="Abshire K.Z."/>
            <person name="Moldover B."/>
            <person name="Olson E.R."/>
            <person name="Neidhardt F.C."/>
        </authorList>
    </citation>
    <scope>IDENTIFICATION BY 2D-GEL</scope>
</reference>
<reference key="7">
    <citation type="journal article" date="1991" name="Proteins">
        <title>The three-dimensional structure of glutathione reductase from Escherichia coli at 3.0-A resolution.</title>
        <authorList>
            <person name="Ermler U."/>
            <person name="Schulz G.E."/>
        </authorList>
    </citation>
    <scope>X-RAY CRYSTALLOGRAPHY (3.0 ANGSTROMS)</scope>
</reference>
<reference evidence="7 8 9" key="8">
    <citation type="journal article" date="1994" name="Protein Sci.">
        <title>Anatomy of an engineered NAD-binding site.</title>
        <authorList>
            <person name="Mittl P.R."/>
            <person name="Berry A."/>
            <person name="Scrutton N.S."/>
            <person name="Perham R.N."/>
            <person name="Schulz G.E."/>
        </authorList>
    </citation>
    <scope>X-RAY CRYSTALLOGRAPHY (1.74 ANGSTROMS) IN COMPLEX WITH FAD AND NADPH</scope>
    <scope>DISULFIDE BONDS</scope>
</reference>
<reference evidence="6" key="9">
    <citation type="journal article" date="1994" name="Protein Sci.">
        <title>Structure of glutathione reductase from Escherichia coli at 1.86 A resolution: comparison with the enzyme from human erythrocytes.</title>
        <authorList>
            <person name="Mittl P.R."/>
            <person name="Schulz G.E."/>
        </authorList>
    </citation>
    <scope>X-RAY CRYSTALLOGRAPHY (1.86 ANGSTROMS) IN COMPLEX WITH FAD</scope>
    <scope>DISULFIDE BONDS</scope>
</reference>
<evidence type="ECO:0000250" key="1">
    <source>
        <dbReference type="UniProtKB" id="P00390"/>
    </source>
</evidence>
<evidence type="ECO:0000269" key="2">
    <source>
    </source>
</evidence>
<evidence type="ECO:0000269" key="3">
    <source>
    </source>
</evidence>
<evidence type="ECO:0000269" key="4">
    <source>
    </source>
</evidence>
<evidence type="ECO:0000305" key="5"/>
<evidence type="ECO:0007744" key="6">
    <source>
        <dbReference type="PDB" id="1GER"/>
    </source>
</evidence>
<evidence type="ECO:0007744" key="7">
    <source>
        <dbReference type="PDB" id="1GES"/>
    </source>
</evidence>
<evidence type="ECO:0007744" key="8">
    <source>
        <dbReference type="PDB" id="1GET"/>
    </source>
</evidence>
<evidence type="ECO:0007744" key="9">
    <source>
        <dbReference type="PDB" id="1GEU"/>
    </source>
</evidence>
<evidence type="ECO:0007829" key="10">
    <source>
        <dbReference type="PDB" id="1GES"/>
    </source>
</evidence>
<evidence type="ECO:0007829" key="11">
    <source>
        <dbReference type="PDB" id="1GET"/>
    </source>
</evidence>
<comment type="function">
    <text evidence="2">Catalyzes the reduction of glutathione disulfide (GSSG) to reduced glutathione (GSH). Constitutes the major mechanism to maintain a high GSH:GSSG ratio in the cytosol.</text>
</comment>
<comment type="catalytic activity">
    <reaction evidence="2">
        <text>2 glutathione + NADP(+) = glutathione disulfide + NADPH + H(+)</text>
        <dbReference type="Rhea" id="RHEA:11740"/>
        <dbReference type="ChEBI" id="CHEBI:15378"/>
        <dbReference type="ChEBI" id="CHEBI:57783"/>
        <dbReference type="ChEBI" id="CHEBI:57925"/>
        <dbReference type="ChEBI" id="CHEBI:58297"/>
        <dbReference type="ChEBI" id="CHEBI:58349"/>
        <dbReference type="EC" id="1.8.1.7"/>
    </reaction>
</comment>
<comment type="cofactor">
    <cofactor evidence="2 3 4">
        <name>FAD</name>
        <dbReference type="ChEBI" id="CHEBI:57692"/>
    </cofactor>
    <text evidence="3 4">Binds 1 FAD per subunit.</text>
</comment>
<comment type="biophysicochemical properties">
    <kinetics>
        <KM evidence="2">16 uM for NADPH</KM>
        <KM evidence="2">377 uM for NADH</KM>
        <KM evidence="2">66 uM for GSSG</KM>
    </kinetics>
    <phDependence>
        <text evidence="2">Optimum pH is 7.5.</text>
    </phDependence>
</comment>
<comment type="subunit">
    <text evidence="2">Homodimer.</text>
</comment>
<comment type="subcellular location">
    <subcellularLocation>
        <location evidence="2">Cytoplasm</location>
    </subcellularLocation>
</comment>
<comment type="miscellaneous">
    <text evidence="3 4">The active site is a redox-active disulfide bond.</text>
</comment>
<comment type="similarity">
    <text evidence="5">Belongs to the class-I pyridine nucleotide-disulfide oxidoreductase family.</text>
</comment>
<dbReference type="EC" id="1.8.1.7"/>
<dbReference type="EMBL" id="M13141">
    <property type="protein sequence ID" value="AAA23926.1"/>
    <property type="molecule type" value="Genomic_DNA"/>
</dbReference>
<dbReference type="EMBL" id="U00039">
    <property type="protein sequence ID" value="AAB18476.1"/>
    <property type="molecule type" value="Genomic_DNA"/>
</dbReference>
<dbReference type="EMBL" id="U00096">
    <property type="protein sequence ID" value="AAC76525.1"/>
    <property type="molecule type" value="Genomic_DNA"/>
</dbReference>
<dbReference type="EMBL" id="AP009048">
    <property type="protein sequence ID" value="BAE77794.1"/>
    <property type="molecule type" value="Genomic_DNA"/>
</dbReference>
<dbReference type="PIR" id="A24409">
    <property type="entry name" value="RDECU"/>
</dbReference>
<dbReference type="RefSeq" id="NP_417957.1">
    <property type="nucleotide sequence ID" value="NC_000913.3"/>
</dbReference>
<dbReference type="PDB" id="1GER">
    <property type="method" value="X-ray"/>
    <property type="resolution" value="1.86 A"/>
    <property type="chains" value="A/B=1-450"/>
</dbReference>
<dbReference type="PDB" id="1GES">
    <property type="method" value="X-ray"/>
    <property type="resolution" value="1.74 A"/>
    <property type="chains" value="A/B=1-450"/>
</dbReference>
<dbReference type="PDB" id="1GET">
    <property type="method" value="X-ray"/>
    <property type="resolution" value="2.00 A"/>
    <property type="chains" value="A/B=1-450"/>
</dbReference>
<dbReference type="PDB" id="1GEU">
    <property type="method" value="X-ray"/>
    <property type="resolution" value="2.20 A"/>
    <property type="chains" value="A/B=1-450"/>
</dbReference>
<dbReference type="PDBsum" id="1GER"/>
<dbReference type="PDBsum" id="1GES"/>
<dbReference type="PDBsum" id="1GET"/>
<dbReference type="PDBsum" id="1GEU"/>
<dbReference type="SMR" id="P06715"/>
<dbReference type="BioGRID" id="4261324">
    <property type="interactions" value="42"/>
</dbReference>
<dbReference type="FunCoup" id="P06715">
    <property type="interactions" value="681"/>
</dbReference>
<dbReference type="IntAct" id="P06715">
    <property type="interactions" value="3"/>
</dbReference>
<dbReference type="STRING" id="511145.b3500"/>
<dbReference type="DrugBank" id="DB03147">
    <property type="generic name" value="Flavin adenine dinucleotide"/>
</dbReference>
<dbReference type="DrugBank" id="DB00336">
    <property type="generic name" value="Nitrofural"/>
</dbReference>
<dbReference type="jPOST" id="P06715"/>
<dbReference type="PaxDb" id="511145-b3500"/>
<dbReference type="EnsemblBacteria" id="AAC76525">
    <property type="protein sequence ID" value="AAC76525"/>
    <property type="gene ID" value="b3500"/>
</dbReference>
<dbReference type="GeneID" id="948014"/>
<dbReference type="KEGG" id="ecj:JW3467"/>
<dbReference type="KEGG" id="eco:b3500"/>
<dbReference type="PATRIC" id="fig|1411691.4.peg.3222"/>
<dbReference type="EchoBASE" id="EB0407"/>
<dbReference type="eggNOG" id="COG1249">
    <property type="taxonomic scope" value="Bacteria"/>
</dbReference>
<dbReference type="HOGENOM" id="CLU_016755_2_2_6"/>
<dbReference type="InParanoid" id="P06715"/>
<dbReference type="OMA" id="MSKHYDY"/>
<dbReference type="OrthoDB" id="9800167at2"/>
<dbReference type="PhylomeDB" id="P06715"/>
<dbReference type="BioCyc" id="EcoCyc:GLUTATHIONE-REDUCT-NADPH-MONOMER"/>
<dbReference type="BioCyc" id="MetaCyc:GLUTATHIONE-REDUCT-NADPH-MONOMER"/>
<dbReference type="SABIO-RK" id="P06715"/>
<dbReference type="EvolutionaryTrace" id="P06715"/>
<dbReference type="PRO" id="PR:P06715"/>
<dbReference type="Proteomes" id="UP000000625">
    <property type="component" value="Chromosome"/>
</dbReference>
<dbReference type="GO" id="GO:0005829">
    <property type="term" value="C:cytosol"/>
    <property type="evidence" value="ECO:0000318"/>
    <property type="project" value="GO_Central"/>
</dbReference>
<dbReference type="GO" id="GO:0016020">
    <property type="term" value="C:membrane"/>
    <property type="evidence" value="ECO:0007005"/>
    <property type="project" value="UniProtKB"/>
</dbReference>
<dbReference type="GO" id="GO:0071949">
    <property type="term" value="F:FAD binding"/>
    <property type="evidence" value="ECO:0000314"/>
    <property type="project" value="EcoCyc"/>
</dbReference>
<dbReference type="GO" id="GO:0050660">
    <property type="term" value="F:flavin adenine dinucleotide binding"/>
    <property type="evidence" value="ECO:0000318"/>
    <property type="project" value="GO_Central"/>
</dbReference>
<dbReference type="GO" id="GO:0004362">
    <property type="term" value="F:glutathione-disulfide reductase (NADPH) activity"/>
    <property type="evidence" value="ECO:0000314"/>
    <property type="project" value="EcoCyc"/>
</dbReference>
<dbReference type="GO" id="GO:0050661">
    <property type="term" value="F:NADP binding"/>
    <property type="evidence" value="ECO:0007669"/>
    <property type="project" value="InterPro"/>
</dbReference>
<dbReference type="GO" id="GO:0045454">
    <property type="term" value="P:cell redox homeostasis"/>
    <property type="evidence" value="ECO:0000318"/>
    <property type="project" value="GO_Central"/>
</dbReference>
<dbReference type="GO" id="GO:0034599">
    <property type="term" value="P:cellular response to oxidative stress"/>
    <property type="evidence" value="ECO:0000318"/>
    <property type="project" value="GO_Central"/>
</dbReference>
<dbReference type="GO" id="GO:0006749">
    <property type="term" value="P:glutathione metabolic process"/>
    <property type="evidence" value="ECO:0000318"/>
    <property type="project" value="GO_Central"/>
</dbReference>
<dbReference type="FunFam" id="3.30.390.30:FF:000003">
    <property type="entry name" value="Glutathione reductase"/>
    <property type="match status" value="1"/>
</dbReference>
<dbReference type="FunFam" id="3.50.50.60:FF:000030">
    <property type="entry name" value="Glutathione reductase"/>
    <property type="match status" value="1"/>
</dbReference>
<dbReference type="Gene3D" id="3.30.390.30">
    <property type="match status" value="1"/>
</dbReference>
<dbReference type="Gene3D" id="3.50.50.60">
    <property type="entry name" value="FAD/NAD(P)-binding domain"/>
    <property type="match status" value="2"/>
</dbReference>
<dbReference type="InterPro" id="IPR036188">
    <property type="entry name" value="FAD/NAD-bd_sf"/>
</dbReference>
<dbReference type="InterPro" id="IPR023753">
    <property type="entry name" value="FAD/NAD-binding_dom"/>
</dbReference>
<dbReference type="InterPro" id="IPR016156">
    <property type="entry name" value="FAD/NAD-linked_Rdtase_dimer_sf"/>
</dbReference>
<dbReference type="InterPro" id="IPR006322">
    <property type="entry name" value="Glutathione_Rdtase_euk/bac"/>
</dbReference>
<dbReference type="InterPro" id="IPR046952">
    <property type="entry name" value="GSHR/TRXR-like"/>
</dbReference>
<dbReference type="InterPro" id="IPR001100">
    <property type="entry name" value="Pyr_nuc-diS_OxRdtase"/>
</dbReference>
<dbReference type="InterPro" id="IPR004099">
    <property type="entry name" value="Pyr_nucl-diS_OxRdtase_dimer"/>
</dbReference>
<dbReference type="InterPro" id="IPR012999">
    <property type="entry name" value="Pyr_OxRdtase_I_AS"/>
</dbReference>
<dbReference type="NCBIfam" id="TIGR01421">
    <property type="entry name" value="gluta_reduc_1"/>
    <property type="match status" value="1"/>
</dbReference>
<dbReference type="NCBIfam" id="NF004776">
    <property type="entry name" value="PRK06116.1"/>
    <property type="match status" value="1"/>
</dbReference>
<dbReference type="PANTHER" id="PTHR42737">
    <property type="entry name" value="GLUTATHIONE REDUCTASE"/>
    <property type="match status" value="1"/>
</dbReference>
<dbReference type="PANTHER" id="PTHR42737:SF2">
    <property type="entry name" value="GLUTATHIONE REDUCTASE"/>
    <property type="match status" value="1"/>
</dbReference>
<dbReference type="Pfam" id="PF07992">
    <property type="entry name" value="Pyr_redox_2"/>
    <property type="match status" value="1"/>
</dbReference>
<dbReference type="Pfam" id="PF02852">
    <property type="entry name" value="Pyr_redox_dim"/>
    <property type="match status" value="1"/>
</dbReference>
<dbReference type="PIRSF" id="PIRSF000350">
    <property type="entry name" value="Mercury_reductase_MerA"/>
    <property type="match status" value="1"/>
</dbReference>
<dbReference type="PRINTS" id="PR00368">
    <property type="entry name" value="FADPNR"/>
</dbReference>
<dbReference type="PRINTS" id="PR00411">
    <property type="entry name" value="PNDRDTASEI"/>
</dbReference>
<dbReference type="SUPFAM" id="SSF51905">
    <property type="entry name" value="FAD/NAD(P)-binding domain"/>
    <property type="match status" value="1"/>
</dbReference>
<dbReference type="SUPFAM" id="SSF55424">
    <property type="entry name" value="FAD/NAD-linked reductases, dimerisation (C-terminal) domain"/>
    <property type="match status" value="1"/>
</dbReference>
<dbReference type="PROSITE" id="PS00076">
    <property type="entry name" value="PYRIDINE_REDOX_1"/>
    <property type="match status" value="1"/>
</dbReference>
<keyword id="KW-0002">3D-structure</keyword>
<keyword id="KW-0963">Cytoplasm</keyword>
<keyword id="KW-1015">Disulfide bond</keyword>
<keyword id="KW-0274">FAD</keyword>
<keyword id="KW-0285">Flavoprotein</keyword>
<keyword id="KW-0521">NADP</keyword>
<keyword id="KW-0560">Oxidoreductase</keyword>
<keyword id="KW-0676">Redox-active center</keyword>
<keyword id="KW-1185">Reference proteome</keyword>
<protein>
    <recommendedName>
        <fullName>Glutathione reductase</fullName>
        <shortName>GR</shortName>
        <shortName>GRase</shortName>
        <ecNumber>1.8.1.7</ecNumber>
    </recommendedName>
</protein>
<accession>P06715</accession>
<accession>Q2M7G2</accession>